<organism>
    <name type="scientific">Arabidopsis thaliana</name>
    <name type="common">Mouse-ear cress</name>
    <dbReference type="NCBI Taxonomy" id="3702"/>
    <lineage>
        <taxon>Eukaryota</taxon>
        <taxon>Viridiplantae</taxon>
        <taxon>Streptophyta</taxon>
        <taxon>Embryophyta</taxon>
        <taxon>Tracheophyta</taxon>
        <taxon>Spermatophyta</taxon>
        <taxon>Magnoliopsida</taxon>
        <taxon>eudicotyledons</taxon>
        <taxon>Gunneridae</taxon>
        <taxon>Pentapetalae</taxon>
        <taxon>rosids</taxon>
        <taxon>malvids</taxon>
        <taxon>Brassicales</taxon>
        <taxon>Brassicaceae</taxon>
        <taxon>Camelineae</taxon>
        <taxon>Arabidopsis</taxon>
    </lineage>
</organism>
<name>PP238_ARATH</name>
<dbReference type="EMBL" id="AB022217">
    <property type="protein sequence ID" value="BAB02763.1"/>
    <property type="molecule type" value="Genomic_DNA"/>
</dbReference>
<dbReference type="EMBL" id="CP002686">
    <property type="protein sequence ID" value="AEE75855.1"/>
    <property type="molecule type" value="Genomic_DNA"/>
</dbReference>
<dbReference type="RefSeq" id="NP_188293.2">
    <property type="nucleotide sequence ID" value="NM_112544.3"/>
</dbReference>
<dbReference type="SMR" id="Q9LUR2"/>
<dbReference type="FunCoup" id="Q9LUR2">
    <property type="interactions" value="5"/>
</dbReference>
<dbReference type="iPTMnet" id="Q9LUR2"/>
<dbReference type="PaxDb" id="3702-AT3G16710.1"/>
<dbReference type="EnsemblPlants" id="AT3G16710.1">
    <property type="protein sequence ID" value="AT3G16710.1"/>
    <property type="gene ID" value="AT3G16710"/>
</dbReference>
<dbReference type="GeneID" id="820923"/>
<dbReference type="Gramene" id="AT3G16710.1">
    <property type="protein sequence ID" value="AT3G16710.1"/>
    <property type="gene ID" value="AT3G16710"/>
</dbReference>
<dbReference type="KEGG" id="ath:AT3G16710"/>
<dbReference type="Araport" id="AT3G16710"/>
<dbReference type="TAIR" id="AT3G16710">
    <property type="gene designation" value="PPR4"/>
</dbReference>
<dbReference type="eggNOG" id="KOG4197">
    <property type="taxonomic scope" value="Eukaryota"/>
</dbReference>
<dbReference type="HOGENOM" id="CLU_002706_49_0_1"/>
<dbReference type="InParanoid" id="Q9LUR2"/>
<dbReference type="OMA" id="DMMERRI"/>
<dbReference type="PhylomeDB" id="Q9LUR2"/>
<dbReference type="PRO" id="PR:Q9LUR2"/>
<dbReference type="Proteomes" id="UP000006548">
    <property type="component" value="Chromosome 3"/>
</dbReference>
<dbReference type="ExpressionAtlas" id="Q9LUR2">
    <property type="expression patterns" value="baseline and differential"/>
</dbReference>
<dbReference type="GO" id="GO:0005739">
    <property type="term" value="C:mitochondrion"/>
    <property type="evidence" value="ECO:0007669"/>
    <property type="project" value="UniProtKB-SubCell"/>
</dbReference>
<dbReference type="Gene3D" id="1.25.40.10">
    <property type="entry name" value="Tetratricopeptide repeat domain"/>
    <property type="match status" value="6"/>
</dbReference>
<dbReference type="InterPro" id="IPR002885">
    <property type="entry name" value="Pentatricopeptide_rpt"/>
</dbReference>
<dbReference type="InterPro" id="IPR011990">
    <property type="entry name" value="TPR-like_helical_dom_sf"/>
</dbReference>
<dbReference type="NCBIfam" id="TIGR00756">
    <property type="entry name" value="PPR"/>
    <property type="match status" value="10"/>
</dbReference>
<dbReference type="PANTHER" id="PTHR47447">
    <property type="entry name" value="OS03G0856100 PROTEIN"/>
    <property type="match status" value="1"/>
</dbReference>
<dbReference type="PANTHER" id="PTHR47447:SF28">
    <property type="entry name" value="PENTACOTRIPEPTIDE-REPEAT REGION OF PRORP DOMAIN-CONTAINING PROTEIN"/>
    <property type="match status" value="1"/>
</dbReference>
<dbReference type="Pfam" id="PF12854">
    <property type="entry name" value="PPR_1"/>
    <property type="match status" value="2"/>
</dbReference>
<dbReference type="Pfam" id="PF13041">
    <property type="entry name" value="PPR_2"/>
    <property type="match status" value="4"/>
</dbReference>
<dbReference type="Pfam" id="PF13812">
    <property type="entry name" value="PPR_3"/>
    <property type="match status" value="1"/>
</dbReference>
<dbReference type="SUPFAM" id="SSF48452">
    <property type="entry name" value="TPR-like"/>
    <property type="match status" value="1"/>
</dbReference>
<dbReference type="PROSITE" id="PS51375">
    <property type="entry name" value="PPR"/>
    <property type="match status" value="13"/>
</dbReference>
<comment type="subcellular location">
    <subcellularLocation>
        <location evidence="2">Mitochondrion</location>
    </subcellularLocation>
</comment>
<comment type="similarity">
    <text evidence="2">Belongs to the PPR family. P subfamily.</text>
</comment>
<comment type="online information" name="Pentatricopeptide repeat proteins">
    <link uri="https://ppr.plantenergy.uwa.edu.au"/>
</comment>
<reference key="1">
    <citation type="journal article" date="2000" name="DNA Res.">
        <title>Structural analysis of Arabidopsis thaliana chromosome 3. I. Sequence features of the regions of 4,504,864 bp covered by sixty P1 and TAC clones.</title>
        <authorList>
            <person name="Sato S."/>
            <person name="Nakamura Y."/>
            <person name="Kaneko T."/>
            <person name="Katoh T."/>
            <person name="Asamizu E."/>
            <person name="Tabata S."/>
        </authorList>
    </citation>
    <scope>NUCLEOTIDE SEQUENCE [LARGE SCALE GENOMIC DNA]</scope>
    <source>
        <strain>cv. Columbia</strain>
    </source>
</reference>
<reference key="2">
    <citation type="journal article" date="2017" name="Plant J.">
        <title>Araport11: a complete reannotation of the Arabidopsis thaliana reference genome.</title>
        <authorList>
            <person name="Cheng C.Y."/>
            <person name="Krishnakumar V."/>
            <person name="Chan A.P."/>
            <person name="Thibaud-Nissen F."/>
            <person name="Schobel S."/>
            <person name="Town C.D."/>
        </authorList>
    </citation>
    <scope>GENOME REANNOTATION</scope>
    <source>
        <strain>cv. Columbia</strain>
    </source>
</reference>
<reference key="3">
    <citation type="journal article" date="2004" name="Plant Cell">
        <title>Genome-wide analysis of Arabidopsis pentatricopeptide repeat proteins reveals their essential role in organelle biogenesis.</title>
        <authorList>
            <person name="Lurin C."/>
            <person name="Andres C."/>
            <person name="Aubourg S."/>
            <person name="Bellaoui M."/>
            <person name="Bitton F."/>
            <person name="Bruyere C."/>
            <person name="Caboche M."/>
            <person name="Debast C."/>
            <person name="Gualberto J."/>
            <person name="Hoffmann B."/>
            <person name="Lecharny A."/>
            <person name="Le Ret M."/>
            <person name="Martin-Magniette M.-L."/>
            <person name="Mireau H."/>
            <person name="Peeters N."/>
            <person name="Renou J.-P."/>
            <person name="Szurek B."/>
            <person name="Taconnat L."/>
            <person name="Small I."/>
        </authorList>
    </citation>
    <scope>GENE FAMILY</scope>
</reference>
<accession>Q9LUR2</accession>
<protein>
    <recommendedName>
        <fullName>Putative pentatricopeptide repeat-containing protein At3g16710, mitochondrial</fullName>
    </recommendedName>
</protein>
<proteinExistence type="inferred from homology"/>
<evidence type="ECO:0000255" key="1"/>
<evidence type="ECO:0000305" key="2"/>
<sequence length="507" mass="57944">MRRSIATGFASIVKGFHLHSHRHRLQISNPRTAASLSLCGFCFWIRAFSSYRKILRNGLHNLQFNDALDLFTRMVHSRPLPSIIDFTRLLSVIAKMNRYDVVISLFEQMQILGIPPLLCTCNIVMHCVCLSSQPCRASCFLGKMMKLGFEPDLVTFTSLLNGYCHWNRIEDAIALFDQILGMGFKPNVVTYTTLIRCLCKNRHLNHAVELFNQMGTNGSRPNVVTYNALVTGLCEIGRWGDAAWLLRDMMKRRIEPNVITFTALIDAFVKVGKLMEAKELYNVMIQMSVYPDVFTYGSLINGLCMYGLLDEARQMFYLMERNGCYPNEVIYTTLIHGFCKSKRVEDGMKIFYEMSQKGVVANTITYTVLIQGYCLVGRPDVAQEVFNQMSSRRAPPDIRTYNVLLDGLCCNGKVEKALMIFEYMRKREMDINIVTYTIIIQGMCKLGKVEDAFDLFCSLFSKGMKPNVITYTTMISGFCRRGLIHEADSLFKKMKEDGFLPNESVYK</sequence>
<feature type="transit peptide" description="Mitochondrion" evidence="1">
    <location>
        <begin position="1"/>
        <end position="48"/>
    </location>
</feature>
<feature type="chain" id="PRO_0000356097" description="Putative pentatricopeptide repeat-containing protein At3g16710, mitochondrial">
    <location>
        <begin position="49"/>
        <end position="507"/>
    </location>
</feature>
<feature type="repeat" description="PPR 1">
    <location>
        <begin position="47"/>
        <end position="81"/>
    </location>
</feature>
<feature type="repeat" description="PPR 2">
    <location>
        <begin position="82"/>
        <end position="116"/>
    </location>
</feature>
<feature type="repeat" description="PPR 3">
    <location>
        <begin position="117"/>
        <end position="151"/>
    </location>
</feature>
<feature type="repeat" description="PPR 4">
    <location>
        <begin position="152"/>
        <end position="186"/>
    </location>
</feature>
<feature type="repeat" description="PPR 5">
    <location>
        <begin position="187"/>
        <end position="221"/>
    </location>
</feature>
<feature type="repeat" description="PPR 6">
    <location>
        <begin position="222"/>
        <end position="256"/>
    </location>
</feature>
<feature type="repeat" description="PPR 7">
    <location>
        <begin position="257"/>
        <end position="291"/>
    </location>
</feature>
<feature type="repeat" description="PPR 8">
    <location>
        <begin position="292"/>
        <end position="326"/>
    </location>
</feature>
<feature type="repeat" description="PPR 9">
    <location>
        <begin position="327"/>
        <end position="361"/>
    </location>
</feature>
<feature type="repeat" description="PPR 10">
    <location>
        <begin position="362"/>
        <end position="396"/>
    </location>
</feature>
<feature type="repeat" description="PPR 11">
    <location>
        <begin position="397"/>
        <end position="431"/>
    </location>
</feature>
<feature type="repeat" description="PPR 12">
    <location>
        <begin position="432"/>
        <end position="466"/>
    </location>
</feature>
<feature type="repeat" description="PPR 13">
    <location>
        <begin position="467"/>
        <end position="501"/>
    </location>
</feature>
<keyword id="KW-0496">Mitochondrion</keyword>
<keyword id="KW-1185">Reference proteome</keyword>
<keyword id="KW-0677">Repeat</keyword>
<keyword id="KW-0809">Transit peptide</keyword>
<gene>
    <name type="ordered locus">At3g16710</name>
    <name type="ORF">MGL6.18</name>
</gene>